<proteinExistence type="inferred from homology"/>
<protein>
    <recommendedName>
        <fullName evidence="1">Fluoride-specific ion channel FluC</fullName>
    </recommendedName>
</protein>
<keyword id="KW-0997">Cell inner membrane</keyword>
<keyword id="KW-1003">Cell membrane</keyword>
<keyword id="KW-0407">Ion channel</keyword>
<keyword id="KW-0406">Ion transport</keyword>
<keyword id="KW-0472">Membrane</keyword>
<keyword id="KW-0479">Metal-binding</keyword>
<keyword id="KW-1185">Reference proteome</keyword>
<keyword id="KW-0915">Sodium</keyword>
<keyword id="KW-0812">Transmembrane</keyword>
<keyword id="KW-1133">Transmembrane helix</keyword>
<keyword id="KW-0813">Transport</keyword>
<feature type="chain" id="PRO_1000206258" description="Fluoride-specific ion channel FluC">
    <location>
        <begin position="1"/>
        <end position="129"/>
    </location>
</feature>
<feature type="transmembrane region" description="Helical" evidence="1">
    <location>
        <begin position="5"/>
        <end position="25"/>
    </location>
</feature>
<feature type="transmembrane region" description="Helical" evidence="1">
    <location>
        <begin position="32"/>
        <end position="52"/>
    </location>
</feature>
<feature type="transmembrane region" description="Helical" evidence="1">
    <location>
        <begin position="60"/>
        <end position="80"/>
    </location>
</feature>
<feature type="transmembrane region" description="Helical" evidence="1">
    <location>
        <begin position="99"/>
        <end position="119"/>
    </location>
</feature>
<feature type="binding site" evidence="1">
    <location>
        <position position="75"/>
    </location>
    <ligand>
        <name>Na(+)</name>
        <dbReference type="ChEBI" id="CHEBI:29101"/>
        <note>structural</note>
    </ligand>
</feature>
<feature type="binding site" evidence="1">
    <location>
        <position position="78"/>
    </location>
    <ligand>
        <name>Na(+)</name>
        <dbReference type="ChEBI" id="CHEBI:29101"/>
        <note>structural</note>
    </ligand>
</feature>
<comment type="function">
    <text evidence="1">Fluoride-specific ion channel. Important for reducing fluoride concentration in the cell, thus reducing its toxicity.</text>
</comment>
<comment type="catalytic activity">
    <reaction evidence="1">
        <text>fluoride(in) = fluoride(out)</text>
        <dbReference type="Rhea" id="RHEA:76159"/>
        <dbReference type="ChEBI" id="CHEBI:17051"/>
    </reaction>
    <physiologicalReaction direction="left-to-right" evidence="1">
        <dbReference type="Rhea" id="RHEA:76160"/>
    </physiologicalReaction>
</comment>
<comment type="activity regulation">
    <text evidence="1">Na(+) is not transported, but it plays an essential structural role and its presence is essential for fluoride channel function.</text>
</comment>
<comment type="subcellular location">
    <subcellularLocation>
        <location evidence="1">Cell inner membrane</location>
        <topology evidence="1">Multi-pass membrane protein</topology>
    </subcellularLocation>
</comment>
<comment type="similarity">
    <text evidence="1">Belongs to the fluoride channel Fluc/FEX (TC 1.A.43) family.</text>
</comment>
<name>FLUC_PELPD</name>
<reference key="1">
    <citation type="submission" date="2006-10" db="EMBL/GenBank/DDBJ databases">
        <title>Complete sequence of chromosome of Pelobacter propionicus DSM 2379.</title>
        <authorList>
            <consortium name="US DOE Joint Genome Institute"/>
            <person name="Copeland A."/>
            <person name="Lucas S."/>
            <person name="Lapidus A."/>
            <person name="Barry K."/>
            <person name="Detter J.C."/>
            <person name="Glavina del Rio T."/>
            <person name="Hammon N."/>
            <person name="Israni S."/>
            <person name="Dalin E."/>
            <person name="Tice H."/>
            <person name="Pitluck S."/>
            <person name="Saunders E."/>
            <person name="Brettin T."/>
            <person name="Bruce D."/>
            <person name="Han C."/>
            <person name="Tapia R."/>
            <person name="Schmutz J."/>
            <person name="Larimer F."/>
            <person name="Land M."/>
            <person name="Hauser L."/>
            <person name="Kyrpides N."/>
            <person name="Kim E."/>
            <person name="Lovley D."/>
            <person name="Richardson P."/>
        </authorList>
    </citation>
    <scope>NUCLEOTIDE SEQUENCE [LARGE SCALE GENOMIC DNA]</scope>
    <source>
        <strain>DSM 2379 / NBRC 103807 / OttBd1</strain>
    </source>
</reference>
<sequence length="129" mass="13750">MKSALTIALFCAGGGLARYYLSGWVYGLLGRAFPFGTLAVNLIGAYCIGLIMEISLRSTLIPATLRLGLTVGFMGGLTTFSTFSYETFKLLEDGQYLVAMVNALASVVMCLLCTWLGVITARALIQGGF</sequence>
<accession>A1AM94</accession>
<dbReference type="EMBL" id="CP000482">
    <property type="protein sequence ID" value="ABK98464.1"/>
    <property type="molecule type" value="Genomic_DNA"/>
</dbReference>
<dbReference type="RefSeq" id="WP_011734776.1">
    <property type="nucleotide sequence ID" value="NC_008609.1"/>
</dbReference>
<dbReference type="SMR" id="A1AM94"/>
<dbReference type="STRING" id="338966.Ppro_0835"/>
<dbReference type="KEGG" id="ppd:Ppro_0835"/>
<dbReference type="eggNOG" id="COG0239">
    <property type="taxonomic scope" value="Bacteria"/>
</dbReference>
<dbReference type="HOGENOM" id="CLU_114342_3_2_7"/>
<dbReference type="OrthoDB" id="9806299at2"/>
<dbReference type="Proteomes" id="UP000006732">
    <property type="component" value="Chromosome"/>
</dbReference>
<dbReference type="GO" id="GO:0005886">
    <property type="term" value="C:plasma membrane"/>
    <property type="evidence" value="ECO:0007669"/>
    <property type="project" value="UniProtKB-SubCell"/>
</dbReference>
<dbReference type="GO" id="GO:0062054">
    <property type="term" value="F:fluoride channel activity"/>
    <property type="evidence" value="ECO:0007669"/>
    <property type="project" value="UniProtKB-UniRule"/>
</dbReference>
<dbReference type="GO" id="GO:0046872">
    <property type="term" value="F:metal ion binding"/>
    <property type="evidence" value="ECO:0007669"/>
    <property type="project" value="UniProtKB-KW"/>
</dbReference>
<dbReference type="GO" id="GO:0140114">
    <property type="term" value="P:cellular detoxification of fluoride"/>
    <property type="evidence" value="ECO:0007669"/>
    <property type="project" value="UniProtKB-UniRule"/>
</dbReference>
<dbReference type="HAMAP" id="MF_00454">
    <property type="entry name" value="FluC"/>
    <property type="match status" value="1"/>
</dbReference>
<dbReference type="InterPro" id="IPR003691">
    <property type="entry name" value="FluC"/>
</dbReference>
<dbReference type="NCBIfam" id="TIGR00494">
    <property type="entry name" value="crcB"/>
    <property type="match status" value="1"/>
</dbReference>
<dbReference type="PANTHER" id="PTHR28259">
    <property type="entry name" value="FLUORIDE EXPORT PROTEIN 1-RELATED"/>
    <property type="match status" value="1"/>
</dbReference>
<dbReference type="PANTHER" id="PTHR28259:SF1">
    <property type="entry name" value="FLUORIDE EXPORT PROTEIN 1-RELATED"/>
    <property type="match status" value="1"/>
</dbReference>
<dbReference type="Pfam" id="PF02537">
    <property type="entry name" value="CRCB"/>
    <property type="match status" value="1"/>
</dbReference>
<organism>
    <name type="scientific">Pelobacter propionicus (strain DSM 2379 / NBRC 103807 / OttBd1)</name>
    <dbReference type="NCBI Taxonomy" id="338966"/>
    <lineage>
        <taxon>Bacteria</taxon>
        <taxon>Pseudomonadati</taxon>
        <taxon>Thermodesulfobacteriota</taxon>
        <taxon>Desulfuromonadia</taxon>
        <taxon>Desulfuromonadales</taxon>
        <taxon>Desulfuromonadaceae</taxon>
        <taxon>Pelobacter</taxon>
    </lineage>
</organism>
<gene>
    <name evidence="1" type="primary">fluC</name>
    <name evidence="1" type="synonym">crcB</name>
    <name type="ordered locus">Ppro_0835</name>
</gene>
<evidence type="ECO:0000255" key="1">
    <source>
        <dbReference type="HAMAP-Rule" id="MF_00454"/>
    </source>
</evidence>